<comment type="function">
    <text evidence="1">Probable transcription factor with a role in the retinal determination (RD) network. Contributes to differentiation of antenna-specific characteristics (By similarity).</text>
</comment>
<comment type="subunit">
    <text evidence="1">Homomers. Interacts with itself, danr, ey and dac to form a complex (or complexes) containing the RD factors (By similarity).</text>
</comment>
<comment type="subcellular location">
    <subcellularLocation>
        <location evidence="1 2">Nucleus</location>
    </subcellularLocation>
</comment>
<comment type="sequence caution" evidence="4">
    <conflict type="erroneous gene model prediction">
        <sequence resource="EMBL-CDS" id="EAT34003"/>
    </conflict>
</comment>
<sequence>MMMATKGKRPLRHLTATDKIDAIQRIHDGESKASVARDIGVPESTLRGWCKNEEKLRYMSRQSAENAEKLTNEATAAALTAVAAAELFNGPPEKRLKLEQGLFGNGKLKYDDSFYKSPRGPMNGLDLSGGDKGLGVSGGDIIMNGLHGADFSSKSKEMNLKGYGADLSKHGDPKQADLSMAAISPLTSLSHLSGMSGLAQSPLALSFNEIATNLNLFAQLNNNHNLATMSNLGGLSAAQSLRNARPKANTSQSPRTSNLSDVNGDKNPSLTVRNLAKLQQKNSGDLSNGMMHGINLSDKYKQQPSAAPLGRDTNAPVDEALWYWLKSQQAMLGLNNLYSSMPRPSSPQQSSSPPQQHQQVQHHPSTQTPTPPIVSTPQPTPPSSAPSLTPEDTKNSSWFWQWYKTFGASLMPGDKSNNNTINANANSKQAAYENILYSQLTKGQNSDSLNNNAQPINLNIISSNGPENVKSEPEDLSNHNHSSSNAAAVAAPAEDLQRFNPSPSTSAKSELKQEDDEEQAGPADDESPMESKCNGKVKDVLDNFLFQNPSSNDRASPANLSIRSNNSPRRRSVSPAVSNHHVNSPEPENGDLAHKSDISEDSNHMLVADIKSSAEAVEHGEKFLKWLEACSDPNVTAMQVMQFKYLLNSIKLSAERQQQNAVSSGEERTRVRRRK</sequence>
<proteinExistence type="inferred from homology"/>
<evidence type="ECO:0000250" key="1">
    <source>
        <dbReference type="UniProtKB" id="Q29CW2"/>
    </source>
</evidence>
<evidence type="ECO:0000255" key="2">
    <source>
        <dbReference type="PROSITE-ProRule" id="PRU00320"/>
    </source>
</evidence>
<evidence type="ECO:0000256" key="3">
    <source>
        <dbReference type="SAM" id="MobiDB-lite"/>
    </source>
</evidence>
<evidence type="ECO:0000305" key="4"/>
<evidence type="ECO:0000312" key="5">
    <source>
        <dbReference type="EMBL" id="EAT34003.1"/>
    </source>
</evidence>
<protein>
    <recommendedName>
        <fullName evidence="1">Protein distal antenna</fullName>
    </recommendedName>
</protein>
<name>DAN_AEDAE</name>
<dbReference type="EMBL" id="CH478090">
    <property type="protein sequence ID" value="EAT34003.1"/>
    <property type="status" value="ALT_SEQ"/>
    <property type="molecule type" value="Genomic_DNA"/>
</dbReference>
<dbReference type="RefSeq" id="XP_001663918.1">
    <property type="nucleotide sequence ID" value="XM_001663868.1"/>
</dbReference>
<dbReference type="SMR" id="Q16IB4"/>
<dbReference type="FunCoup" id="Q16IB4">
    <property type="interactions" value="137"/>
</dbReference>
<dbReference type="STRING" id="7159.Q16IB4"/>
<dbReference type="PaxDb" id="7159-AAEL013733-PA"/>
<dbReference type="VEuPathDB" id="VectorBase:AAEL013733"/>
<dbReference type="eggNOG" id="ENOG502S5K1">
    <property type="taxonomic scope" value="Eukaryota"/>
</dbReference>
<dbReference type="HOGENOM" id="CLU_405596_0_0_1"/>
<dbReference type="InParanoid" id="Q16IB4"/>
<dbReference type="Proteomes" id="UP000008820">
    <property type="component" value="Unassembled WGS sequence"/>
</dbReference>
<dbReference type="Proteomes" id="UP000682892">
    <property type="component" value="Unassembled WGS sequence"/>
</dbReference>
<dbReference type="GO" id="GO:0005634">
    <property type="term" value="C:nucleus"/>
    <property type="evidence" value="ECO:0000250"/>
    <property type="project" value="UniProtKB"/>
</dbReference>
<dbReference type="GO" id="GO:0003677">
    <property type="term" value="F:DNA binding"/>
    <property type="evidence" value="ECO:0007669"/>
    <property type="project" value="UniProtKB-KW"/>
</dbReference>
<dbReference type="GO" id="GO:0003700">
    <property type="term" value="F:DNA-binding transcription factor activity"/>
    <property type="evidence" value="ECO:0000250"/>
    <property type="project" value="UniProtKB"/>
</dbReference>
<dbReference type="GO" id="GO:0007469">
    <property type="term" value="P:antennal development"/>
    <property type="evidence" value="ECO:0000250"/>
    <property type="project" value="UniProtKB"/>
</dbReference>
<dbReference type="GO" id="GO:0048749">
    <property type="term" value="P:compound eye development"/>
    <property type="evidence" value="ECO:0000250"/>
    <property type="project" value="UniProtKB"/>
</dbReference>
<dbReference type="GO" id="GO:0006355">
    <property type="term" value="P:regulation of DNA-templated transcription"/>
    <property type="evidence" value="ECO:0000250"/>
    <property type="project" value="UniProtKB"/>
</dbReference>
<dbReference type="GO" id="GO:0007379">
    <property type="term" value="P:segment specification"/>
    <property type="evidence" value="ECO:0000250"/>
    <property type="project" value="UniProtKB"/>
</dbReference>
<dbReference type="FunFam" id="1.10.10.10:FF:000293">
    <property type="entry name" value="Tigger transposable element-derived protein 5"/>
    <property type="match status" value="1"/>
</dbReference>
<dbReference type="Gene3D" id="1.10.10.10">
    <property type="entry name" value="Winged helix-like DNA-binding domain superfamily/Winged helix DNA-binding domain"/>
    <property type="match status" value="1"/>
</dbReference>
<dbReference type="InterPro" id="IPR009057">
    <property type="entry name" value="Homeodomain-like_sf"/>
</dbReference>
<dbReference type="InterPro" id="IPR007889">
    <property type="entry name" value="HTH_Psq"/>
</dbReference>
<dbReference type="InterPro" id="IPR051839">
    <property type="entry name" value="RD_transcriptional_regulator"/>
</dbReference>
<dbReference type="InterPro" id="IPR036388">
    <property type="entry name" value="WH-like_DNA-bd_sf"/>
</dbReference>
<dbReference type="PANTHER" id="PTHR33215">
    <property type="entry name" value="PROTEIN DISTAL ANTENNA"/>
    <property type="match status" value="1"/>
</dbReference>
<dbReference type="PANTHER" id="PTHR33215:SF13">
    <property type="entry name" value="PROTEIN DISTAL ANTENNA"/>
    <property type="match status" value="1"/>
</dbReference>
<dbReference type="Pfam" id="PF04218">
    <property type="entry name" value="CENP-B_N"/>
    <property type="match status" value="1"/>
</dbReference>
<dbReference type="SUPFAM" id="SSF46689">
    <property type="entry name" value="Homeodomain-like"/>
    <property type="match status" value="1"/>
</dbReference>
<dbReference type="PROSITE" id="PS50960">
    <property type="entry name" value="HTH_PSQ"/>
    <property type="match status" value="1"/>
</dbReference>
<organism>
    <name type="scientific">Aedes aegypti</name>
    <name type="common">Yellowfever mosquito</name>
    <name type="synonym">Culex aegypti</name>
    <dbReference type="NCBI Taxonomy" id="7159"/>
    <lineage>
        <taxon>Eukaryota</taxon>
        <taxon>Metazoa</taxon>
        <taxon>Ecdysozoa</taxon>
        <taxon>Arthropoda</taxon>
        <taxon>Hexapoda</taxon>
        <taxon>Insecta</taxon>
        <taxon>Pterygota</taxon>
        <taxon>Neoptera</taxon>
        <taxon>Endopterygota</taxon>
        <taxon>Diptera</taxon>
        <taxon>Nematocera</taxon>
        <taxon>Culicoidea</taxon>
        <taxon>Culicidae</taxon>
        <taxon>Culicinae</taxon>
        <taxon>Aedini</taxon>
        <taxon>Aedes</taxon>
        <taxon>Stegomyia</taxon>
    </lineage>
</organism>
<feature type="chain" id="PRO_0000351198" description="Protein distal antenna">
    <location>
        <begin position="1"/>
        <end position="675"/>
    </location>
</feature>
<feature type="domain" description="HTH psq-type" evidence="2">
    <location>
        <begin position="5"/>
        <end position="56"/>
    </location>
</feature>
<feature type="DNA-binding region" description="H-T-H motif" evidence="2">
    <location>
        <begin position="32"/>
        <end position="52"/>
    </location>
</feature>
<feature type="region of interest" description="Disordered" evidence="3">
    <location>
        <begin position="239"/>
        <end position="269"/>
    </location>
</feature>
<feature type="region of interest" description="Disordered" evidence="3">
    <location>
        <begin position="337"/>
        <end position="393"/>
    </location>
</feature>
<feature type="region of interest" description="Disordered" evidence="3">
    <location>
        <begin position="458"/>
        <end position="534"/>
    </location>
</feature>
<feature type="region of interest" description="Disordered" evidence="3">
    <location>
        <begin position="546"/>
        <end position="596"/>
    </location>
</feature>
<feature type="region of interest" description="Disordered" evidence="3">
    <location>
        <begin position="655"/>
        <end position="675"/>
    </location>
</feature>
<feature type="compositionally biased region" description="Low complexity" evidence="3">
    <location>
        <begin position="339"/>
        <end position="368"/>
    </location>
</feature>
<feature type="compositionally biased region" description="Pro residues" evidence="3">
    <location>
        <begin position="369"/>
        <end position="384"/>
    </location>
</feature>
<feature type="compositionally biased region" description="Basic and acidic residues" evidence="3">
    <location>
        <begin position="469"/>
        <end position="478"/>
    </location>
</feature>
<feature type="compositionally biased region" description="Low complexity" evidence="3">
    <location>
        <begin position="479"/>
        <end position="493"/>
    </location>
</feature>
<feature type="compositionally biased region" description="Polar residues" evidence="3">
    <location>
        <begin position="499"/>
        <end position="508"/>
    </location>
</feature>
<feature type="compositionally biased region" description="Acidic residues" evidence="3">
    <location>
        <begin position="513"/>
        <end position="528"/>
    </location>
</feature>
<feature type="compositionally biased region" description="Low complexity" evidence="3">
    <location>
        <begin position="559"/>
        <end position="579"/>
    </location>
</feature>
<keyword id="KW-0217">Developmental protein</keyword>
<keyword id="KW-0238">DNA-binding</keyword>
<keyword id="KW-0539">Nucleus</keyword>
<keyword id="KW-0597">Phosphoprotein</keyword>
<keyword id="KW-1185">Reference proteome</keyword>
<keyword id="KW-0804">Transcription</keyword>
<keyword id="KW-0805">Transcription regulation</keyword>
<accession>Q16IB4</accession>
<reference evidence="5" key="1">
    <citation type="journal article" date="2007" name="Science">
        <title>Genome sequence of Aedes aegypti, a major arbovirus vector.</title>
        <authorList>
            <person name="Nene V."/>
            <person name="Wortman J.R."/>
            <person name="Lawson D."/>
            <person name="Haas B.J."/>
            <person name="Kodira C.D."/>
            <person name="Tu Z.J."/>
            <person name="Loftus B.J."/>
            <person name="Xi Z."/>
            <person name="Megy K."/>
            <person name="Grabherr M."/>
            <person name="Ren Q."/>
            <person name="Zdobnov E.M."/>
            <person name="Lobo N.F."/>
            <person name="Campbell K.S."/>
            <person name="Brown S.E."/>
            <person name="Bonaldo M.F."/>
            <person name="Zhu J."/>
            <person name="Sinkins S.P."/>
            <person name="Hogenkamp D.G."/>
            <person name="Amedeo P."/>
            <person name="Arensburger P."/>
            <person name="Atkinson P.W."/>
            <person name="Bidwell S.L."/>
            <person name="Biedler J."/>
            <person name="Birney E."/>
            <person name="Bruggner R.V."/>
            <person name="Costas J."/>
            <person name="Coy M.R."/>
            <person name="Crabtree J."/>
            <person name="Crawford M."/>
            <person name="DeBruyn B."/>
            <person name="DeCaprio D."/>
            <person name="Eiglmeier K."/>
            <person name="Eisenstadt E."/>
            <person name="El-Dorry H."/>
            <person name="Gelbart W.M."/>
            <person name="Gomes S.L."/>
            <person name="Hammond M."/>
            <person name="Hannick L.I."/>
            <person name="Hogan J.R."/>
            <person name="Holmes M.H."/>
            <person name="Jaffe D."/>
            <person name="Johnston S.J."/>
            <person name="Kennedy R.C."/>
            <person name="Koo H."/>
            <person name="Kravitz S."/>
            <person name="Kriventseva E.V."/>
            <person name="Kulp D."/>
            <person name="Labutti K."/>
            <person name="Lee E."/>
            <person name="Li S."/>
            <person name="Lovin D.D."/>
            <person name="Mao C."/>
            <person name="Mauceli E."/>
            <person name="Menck C.F."/>
            <person name="Miller J.R."/>
            <person name="Montgomery P."/>
            <person name="Mori A."/>
            <person name="Nascimento A.L."/>
            <person name="Naveira H.F."/>
            <person name="Nusbaum C."/>
            <person name="O'Leary S.B."/>
            <person name="Orvis J."/>
            <person name="Pertea M."/>
            <person name="Quesneville H."/>
            <person name="Reidenbach K.R."/>
            <person name="Rogers Y.-H.C."/>
            <person name="Roth C.W."/>
            <person name="Schneider J.R."/>
            <person name="Schatz M."/>
            <person name="Shumway M."/>
            <person name="Stanke M."/>
            <person name="Stinson E.O."/>
            <person name="Tubio J.M.C."/>
            <person name="Vanzee J.P."/>
            <person name="Verjovski-Almeida S."/>
            <person name="Werner D."/>
            <person name="White O.R."/>
            <person name="Wyder S."/>
            <person name="Zeng Q."/>
            <person name="Zhao Q."/>
            <person name="Zhao Y."/>
            <person name="Hill C.A."/>
            <person name="Raikhel A.S."/>
            <person name="Soares M.B."/>
            <person name="Knudson D.L."/>
            <person name="Lee N.H."/>
            <person name="Galagan J."/>
            <person name="Salzberg S.L."/>
            <person name="Paulsen I.T."/>
            <person name="Dimopoulos G."/>
            <person name="Collins F.H."/>
            <person name="Bruce B."/>
            <person name="Fraser-Liggett C.M."/>
            <person name="Severson D.W."/>
        </authorList>
    </citation>
    <scope>NUCLEOTIDE SEQUENCE [LARGE SCALE GENOMIC DNA]</scope>
    <source>
        <strain>LVPib12</strain>
    </source>
</reference>
<gene>
    <name evidence="1" type="primary">dan</name>
    <name type="ORF">AAEL013733</name>
</gene>